<name>ACEB_SCHPO</name>
<accession>Q9P6J1</accession>
<protein>
    <recommendedName>
        <fullName>Mitochondrial 2-methylisocitrate lyase</fullName>
        <shortName>Methylisocitrate lyase</shortName>
        <ecNumber>4.1.3.30</ecNumber>
    </recommendedName>
</protein>
<proteinExistence type="inferred from homology"/>
<dbReference type="EC" id="4.1.3.30"/>
<dbReference type="EMBL" id="CU329671">
    <property type="protein sequence ID" value="CAB91173.1"/>
    <property type="molecule type" value="Genomic_DNA"/>
</dbReference>
<dbReference type="SMR" id="Q9P6J1"/>
<dbReference type="FunCoup" id="Q9P6J1">
    <property type="interactions" value="87"/>
</dbReference>
<dbReference type="STRING" id="284812.Q9P6J1"/>
<dbReference type="PaxDb" id="4896-SPBC1683.11c.1"/>
<dbReference type="EnsemblFungi" id="SPBC1683.11c.1">
    <property type="protein sequence ID" value="SPBC1683.11c.1:pep"/>
    <property type="gene ID" value="SPBC1683.11c"/>
</dbReference>
<dbReference type="KEGG" id="spo:2539803"/>
<dbReference type="PomBase" id="SPBC1683.11c"/>
<dbReference type="VEuPathDB" id="FungiDB:SPBC1683.11c"/>
<dbReference type="eggNOG" id="KOG1260">
    <property type="taxonomic scope" value="Eukaryota"/>
</dbReference>
<dbReference type="HOGENOM" id="CLU_019214_2_2_1"/>
<dbReference type="InParanoid" id="Q9P6J1"/>
<dbReference type="OMA" id="GMDHADY"/>
<dbReference type="PhylomeDB" id="Q9P6J1"/>
<dbReference type="UniPathway" id="UPA00946"/>
<dbReference type="PRO" id="PR:Q9P6J1"/>
<dbReference type="Proteomes" id="UP000002485">
    <property type="component" value="Chromosome II"/>
</dbReference>
<dbReference type="GO" id="GO:0005829">
    <property type="term" value="C:cytosol"/>
    <property type="evidence" value="ECO:0007005"/>
    <property type="project" value="PomBase"/>
</dbReference>
<dbReference type="GO" id="GO:0005759">
    <property type="term" value="C:mitochondrial matrix"/>
    <property type="evidence" value="ECO:0000250"/>
    <property type="project" value="PomBase"/>
</dbReference>
<dbReference type="GO" id="GO:0004451">
    <property type="term" value="F:isocitrate lyase activity"/>
    <property type="evidence" value="ECO:0000318"/>
    <property type="project" value="GO_Central"/>
</dbReference>
<dbReference type="GO" id="GO:0046421">
    <property type="term" value="F:methylisocitrate lyase activity"/>
    <property type="evidence" value="ECO:0000250"/>
    <property type="project" value="PomBase"/>
</dbReference>
<dbReference type="GO" id="GO:0006567">
    <property type="term" value="P:threonine catabolic process"/>
    <property type="evidence" value="ECO:0000250"/>
    <property type="project" value="PomBase"/>
</dbReference>
<dbReference type="CDD" id="cd00377">
    <property type="entry name" value="ICL_PEPM"/>
    <property type="match status" value="1"/>
</dbReference>
<dbReference type="Gene3D" id="1.10.10.850">
    <property type="match status" value="1"/>
</dbReference>
<dbReference type="Gene3D" id="3.20.20.60">
    <property type="entry name" value="Phosphoenolpyruvate-binding domains"/>
    <property type="match status" value="1"/>
</dbReference>
<dbReference type="InterPro" id="IPR039556">
    <property type="entry name" value="ICL/PEPM"/>
</dbReference>
<dbReference type="InterPro" id="IPR006254">
    <property type="entry name" value="Isocitrate_lyase"/>
</dbReference>
<dbReference type="InterPro" id="IPR015813">
    <property type="entry name" value="Pyrv/PenolPyrv_kinase-like_dom"/>
</dbReference>
<dbReference type="InterPro" id="IPR040442">
    <property type="entry name" value="Pyrv_kinase-like_dom_sf"/>
</dbReference>
<dbReference type="NCBIfam" id="TIGR01346">
    <property type="entry name" value="isocit_lyase"/>
    <property type="match status" value="1"/>
</dbReference>
<dbReference type="PANTHER" id="PTHR21631:SF3">
    <property type="entry name" value="BIFUNCTIONAL GLYOXYLATE CYCLE PROTEIN"/>
    <property type="match status" value="1"/>
</dbReference>
<dbReference type="PANTHER" id="PTHR21631">
    <property type="entry name" value="ISOCITRATE LYASE/MALATE SYNTHASE"/>
    <property type="match status" value="1"/>
</dbReference>
<dbReference type="Pfam" id="PF00463">
    <property type="entry name" value="ICL"/>
    <property type="match status" value="1"/>
</dbReference>
<dbReference type="PIRSF" id="PIRSF001362">
    <property type="entry name" value="Isocit_lyase"/>
    <property type="match status" value="1"/>
</dbReference>
<dbReference type="SUPFAM" id="SSF51621">
    <property type="entry name" value="Phosphoenolpyruvate/pyruvate domain"/>
    <property type="match status" value="1"/>
</dbReference>
<sequence>MTTDMDLEQLEYEKEVEEIEKWWATPKQSQIKRPYTASTVAVLSEVTKAYYPSSQQALKLYDLLREHRNKGTATLTYGVVDPVLASQASKAGLETIFVSGCLCGLSSVDEPGMDHADYPWDTVPKAVDRIFRSQNWHARRQKQFHLMKPAEERKQLPKYDYLLPIIADGDMGFGSVTSTMKMTKRFVESGVAMIHLDDLAIGLKRFTVGQGRTVVPTSEYLRRLTAVRLQFDIMKAETMLLCRCDTDHAEFITSVVDPRDHAYVLGATTKIESLIKALKDAESTGVSMKKARENWIERAKLMTFDEAVKSTATPKEYENYISAISKKPFHSISERQELAEKYLSNEVFFDWELPRSSDGQYFFKPTVQTVIERAIAAAPLGEMTWARMDYPKWQDIKAFHEGVRAVYPDRMFAFGFTGNYDFKAAGFSEEQLRNLTSDMAKLGVCWQVQPYFTCQVLNKASVDYSNIWKKDGIFGYVKTVQEPALKEDVDGFENEWCGTYFADKLLSAAGSSDKTIPY</sequence>
<gene>
    <name type="primary">icl2</name>
    <name type="ORF">SPBC1683.11c</name>
</gene>
<keyword id="KW-0963">Cytoplasm</keyword>
<keyword id="KW-0456">Lyase</keyword>
<keyword id="KW-0496">Mitochondrion</keyword>
<keyword id="KW-1185">Reference proteome</keyword>
<feature type="chain" id="PRO_0000314754" description="Mitochondrial 2-methylisocitrate lyase">
    <location>
        <begin position="1"/>
        <end position="518"/>
    </location>
</feature>
<reference key="1">
    <citation type="journal article" date="2002" name="Nature">
        <title>The genome sequence of Schizosaccharomyces pombe.</title>
        <authorList>
            <person name="Wood V."/>
            <person name="Gwilliam R."/>
            <person name="Rajandream M.A."/>
            <person name="Lyne M.H."/>
            <person name="Lyne R."/>
            <person name="Stewart A."/>
            <person name="Sgouros J.G."/>
            <person name="Peat N."/>
            <person name="Hayles J."/>
            <person name="Baker S.G."/>
            <person name="Basham D."/>
            <person name="Bowman S."/>
            <person name="Brooks K."/>
            <person name="Brown D."/>
            <person name="Brown S."/>
            <person name="Chillingworth T."/>
            <person name="Churcher C.M."/>
            <person name="Collins M."/>
            <person name="Connor R."/>
            <person name="Cronin A."/>
            <person name="Davis P."/>
            <person name="Feltwell T."/>
            <person name="Fraser A."/>
            <person name="Gentles S."/>
            <person name="Goble A."/>
            <person name="Hamlin N."/>
            <person name="Harris D.E."/>
            <person name="Hidalgo J."/>
            <person name="Hodgson G."/>
            <person name="Holroyd S."/>
            <person name="Hornsby T."/>
            <person name="Howarth S."/>
            <person name="Huckle E.J."/>
            <person name="Hunt S."/>
            <person name="Jagels K."/>
            <person name="James K.D."/>
            <person name="Jones L."/>
            <person name="Jones M."/>
            <person name="Leather S."/>
            <person name="McDonald S."/>
            <person name="McLean J."/>
            <person name="Mooney P."/>
            <person name="Moule S."/>
            <person name="Mungall K.L."/>
            <person name="Murphy L.D."/>
            <person name="Niblett D."/>
            <person name="Odell C."/>
            <person name="Oliver K."/>
            <person name="O'Neil S."/>
            <person name="Pearson D."/>
            <person name="Quail M.A."/>
            <person name="Rabbinowitsch E."/>
            <person name="Rutherford K.M."/>
            <person name="Rutter S."/>
            <person name="Saunders D."/>
            <person name="Seeger K."/>
            <person name="Sharp S."/>
            <person name="Skelton J."/>
            <person name="Simmonds M.N."/>
            <person name="Squares R."/>
            <person name="Squares S."/>
            <person name="Stevens K."/>
            <person name="Taylor K."/>
            <person name="Taylor R.G."/>
            <person name="Tivey A."/>
            <person name="Walsh S.V."/>
            <person name="Warren T."/>
            <person name="Whitehead S."/>
            <person name="Woodward J.R."/>
            <person name="Volckaert G."/>
            <person name="Aert R."/>
            <person name="Robben J."/>
            <person name="Grymonprez B."/>
            <person name="Weltjens I."/>
            <person name="Vanstreels E."/>
            <person name="Rieger M."/>
            <person name="Schaefer M."/>
            <person name="Mueller-Auer S."/>
            <person name="Gabel C."/>
            <person name="Fuchs M."/>
            <person name="Duesterhoeft A."/>
            <person name="Fritzc C."/>
            <person name="Holzer E."/>
            <person name="Moestl D."/>
            <person name="Hilbert H."/>
            <person name="Borzym K."/>
            <person name="Langer I."/>
            <person name="Beck A."/>
            <person name="Lehrach H."/>
            <person name="Reinhardt R."/>
            <person name="Pohl T.M."/>
            <person name="Eger P."/>
            <person name="Zimmermann W."/>
            <person name="Wedler H."/>
            <person name="Wambutt R."/>
            <person name="Purnelle B."/>
            <person name="Goffeau A."/>
            <person name="Cadieu E."/>
            <person name="Dreano S."/>
            <person name="Gloux S."/>
            <person name="Lelaure V."/>
            <person name="Mottier S."/>
            <person name="Galibert F."/>
            <person name="Aves S.J."/>
            <person name="Xiang Z."/>
            <person name="Hunt C."/>
            <person name="Moore K."/>
            <person name="Hurst S.M."/>
            <person name="Lucas M."/>
            <person name="Rochet M."/>
            <person name="Gaillardin C."/>
            <person name="Tallada V.A."/>
            <person name="Garzon A."/>
            <person name="Thode G."/>
            <person name="Daga R.R."/>
            <person name="Cruzado L."/>
            <person name="Jimenez J."/>
            <person name="Sanchez M."/>
            <person name="del Rey F."/>
            <person name="Benito J."/>
            <person name="Dominguez A."/>
            <person name="Revuelta J.L."/>
            <person name="Moreno S."/>
            <person name="Armstrong J."/>
            <person name="Forsburg S.L."/>
            <person name="Cerutti L."/>
            <person name="Lowe T."/>
            <person name="McCombie W.R."/>
            <person name="Paulsen I."/>
            <person name="Potashkin J."/>
            <person name="Shpakovski G.V."/>
            <person name="Ussery D."/>
            <person name="Barrell B.G."/>
            <person name="Nurse P."/>
        </authorList>
    </citation>
    <scope>NUCLEOTIDE SEQUENCE [LARGE SCALE GENOMIC DNA]</scope>
    <source>
        <strain>972 / ATCC 24843</strain>
    </source>
</reference>
<reference key="2">
    <citation type="journal article" date="2006" name="Nat. Biotechnol.">
        <title>ORFeome cloning and global analysis of protein localization in the fission yeast Schizosaccharomyces pombe.</title>
        <authorList>
            <person name="Matsuyama A."/>
            <person name="Arai R."/>
            <person name="Yashiroda Y."/>
            <person name="Shirai A."/>
            <person name="Kamata A."/>
            <person name="Sekido S."/>
            <person name="Kobayashi Y."/>
            <person name="Hashimoto A."/>
            <person name="Hamamoto M."/>
            <person name="Hiraoka Y."/>
            <person name="Horinouchi S."/>
            <person name="Yoshida M."/>
        </authorList>
    </citation>
    <scope>SUBCELLULAR LOCATION [LARGE SCALE ANALYSIS]</scope>
</reference>
<evidence type="ECO:0000250" key="1"/>
<evidence type="ECO:0000269" key="2">
    <source>
    </source>
</evidence>
<evidence type="ECO:0000305" key="3"/>
<comment type="function">
    <text evidence="1">Catalyzes the formation of pyruvate and succinate from 2-methylisocitrate during the metabolism of endogenous propionyl-CoA. Does not act on isocitrate (By similarity).</text>
</comment>
<comment type="catalytic activity">
    <reaction>
        <text>(2S,3R)-3-hydroxybutane-1,2,3-tricarboxylate = pyruvate + succinate</text>
        <dbReference type="Rhea" id="RHEA:16809"/>
        <dbReference type="ChEBI" id="CHEBI:15361"/>
        <dbReference type="ChEBI" id="CHEBI:30031"/>
        <dbReference type="ChEBI" id="CHEBI:57429"/>
        <dbReference type="EC" id="4.1.3.30"/>
    </reaction>
</comment>
<comment type="pathway">
    <text>Organic acid metabolism; propanoate degradation.</text>
</comment>
<comment type="subcellular location">
    <subcellularLocation>
        <location evidence="1">Mitochondrion matrix</location>
    </subcellularLocation>
    <subcellularLocation>
        <location evidence="2">Cytoplasm</location>
    </subcellularLocation>
</comment>
<comment type="similarity">
    <text evidence="3">Belongs to the isocitrate lyase/PEP mutase superfamily. Isocitrate lyase family.</text>
</comment>
<organism>
    <name type="scientific">Schizosaccharomyces pombe (strain 972 / ATCC 24843)</name>
    <name type="common">Fission yeast</name>
    <dbReference type="NCBI Taxonomy" id="284812"/>
    <lineage>
        <taxon>Eukaryota</taxon>
        <taxon>Fungi</taxon>
        <taxon>Dikarya</taxon>
        <taxon>Ascomycota</taxon>
        <taxon>Taphrinomycotina</taxon>
        <taxon>Schizosaccharomycetes</taxon>
        <taxon>Schizosaccharomycetales</taxon>
        <taxon>Schizosaccharomycetaceae</taxon>
        <taxon>Schizosaccharomyces</taxon>
    </lineage>
</organism>